<evidence type="ECO:0000255" key="1">
    <source>
        <dbReference type="HAMAP-Rule" id="MF_00508"/>
    </source>
</evidence>
<evidence type="ECO:0000305" key="2"/>
<feature type="chain" id="PRO_0000276604" description="Small ribosomal subunit protein uS10c">
    <location>
        <begin position="1"/>
        <end position="107"/>
    </location>
</feature>
<sequence length="107" mass="12465">MEIKPNEKIRVRLESFNHELLNTSCQKIMEITQNNNVDNVGVVSLPTDKRIYCVLRSPHVNKDSREHFEIRTHKRILEISYDSSVNIFDLLVKSDLPPGVLYRICLS</sequence>
<protein>
    <recommendedName>
        <fullName evidence="1">Small ribosomal subunit protein uS10c</fullName>
    </recommendedName>
    <alternativeName>
        <fullName evidence="2">30S ribosomal protein S10, chloroplastic</fullName>
    </alternativeName>
</protein>
<comment type="function">
    <text evidence="1">Involved in the binding of tRNA to the ribosomes.</text>
</comment>
<comment type="subunit">
    <text evidence="1">Part of the 30S ribosomal subunit.</text>
</comment>
<comment type="subcellular location">
    <subcellularLocation>
        <location evidence="1">Plastid</location>
        <location evidence="1">Chloroplast</location>
    </subcellularLocation>
</comment>
<comment type="similarity">
    <text evidence="1">Belongs to the universal ribosomal protein uS10 family.</text>
</comment>
<gene>
    <name evidence="1" type="primary">rps10</name>
</gene>
<geneLocation type="chloroplast"/>
<keyword id="KW-0150">Chloroplast</keyword>
<keyword id="KW-0934">Plastid</keyword>
<keyword id="KW-0687">Ribonucleoprotein</keyword>
<keyword id="KW-0689">Ribosomal protein</keyword>
<proteinExistence type="inferred from homology"/>
<name>RR10_THAPS</name>
<dbReference type="EMBL" id="EF067921">
    <property type="protein sequence ID" value="ABK20836.1"/>
    <property type="molecule type" value="Genomic_DNA"/>
</dbReference>
<dbReference type="RefSeq" id="YP_874613.1">
    <property type="nucleotide sequence ID" value="NC_008589.1"/>
</dbReference>
<dbReference type="SMR" id="A0T101"/>
<dbReference type="STRING" id="35128.A0T101"/>
<dbReference type="GeneID" id="4524856"/>
<dbReference type="InParanoid" id="A0T101"/>
<dbReference type="GO" id="GO:0009507">
    <property type="term" value="C:chloroplast"/>
    <property type="evidence" value="ECO:0007669"/>
    <property type="project" value="UniProtKB-SubCell"/>
</dbReference>
<dbReference type="GO" id="GO:0005739">
    <property type="term" value="C:mitochondrion"/>
    <property type="evidence" value="ECO:0000318"/>
    <property type="project" value="GO_Central"/>
</dbReference>
<dbReference type="GO" id="GO:0015935">
    <property type="term" value="C:small ribosomal subunit"/>
    <property type="evidence" value="ECO:0000318"/>
    <property type="project" value="GO_Central"/>
</dbReference>
<dbReference type="GO" id="GO:0003735">
    <property type="term" value="F:structural constituent of ribosome"/>
    <property type="evidence" value="ECO:0000318"/>
    <property type="project" value="GO_Central"/>
</dbReference>
<dbReference type="GO" id="GO:0000049">
    <property type="term" value="F:tRNA binding"/>
    <property type="evidence" value="ECO:0007669"/>
    <property type="project" value="UniProtKB-UniRule"/>
</dbReference>
<dbReference type="GO" id="GO:0006412">
    <property type="term" value="P:translation"/>
    <property type="evidence" value="ECO:0007669"/>
    <property type="project" value="UniProtKB-UniRule"/>
</dbReference>
<dbReference type="FunFam" id="3.30.70.600:FF:000003">
    <property type="entry name" value="30S ribosomal protein S10"/>
    <property type="match status" value="1"/>
</dbReference>
<dbReference type="Gene3D" id="3.30.70.600">
    <property type="entry name" value="Ribosomal protein S10 domain"/>
    <property type="match status" value="1"/>
</dbReference>
<dbReference type="HAMAP" id="MF_00508">
    <property type="entry name" value="Ribosomal_uS10"/>
    <property type="match status" value="1"/>
</dbReference>
<dbReference type="InterPro" id="IPR001848">
    <property type="entry name" value="Ribosomal_uS10"/>
</dbReference>
<dbReference type="InterPro" id="IPR027486">
    <property type="entry name" value="Ribosomal_uS10_dom"/>
</dbReference>
<dbReference type="InterPro" id="IPR036838">
    <property type="entry name" value="Ribosomal_uS10_dom_sf"/>
</dbReference>
<dbReference type="NCBIfam" id="NF001861">
    <property type="entry name" value="PRK00596.1"/>
    <property type="match status" value="1"/>
</dbReference>
<dbReference type="NCBIfam" id="TIGR01049">
    <property type="entry name" value="rpsJ_bact"/>
    <property type="match status" value="1"/>
</dbReference>
<dbReference type="PANTHER" id="PTHR11700">
    <property type="entry name" value="30S RIBOSOMAL PROTEIN S10 FAMILY MEMBER"/>
    <property type="match status" value="1"/>
</dbReference>
<dbReference type="Pfam" id="PF00338">
    <property type="entry name" value="Ribosomal_S10"/>
    <property type="match status" value="1"/>
</dbReference>
<dbReference type="PRINTS" id="PR00971">
    <property type="entry name" value="RIBOSOMALS10"/>
</dbReference>
<dbReference type="SMART" id="SM01403">
    <property type="entry name" value="Ribosomal_S10"/>
    <property type="match status" value="1"/>
</dbReference>
<dbReference type="SUPFAM" id="SSF54999">
    <property type="entry name" value="Ribosomal protein S10"/>
    <property type="match status" value="1"/>
</dbReference>
<reference key="1">
    <citation type="journal article" date="2007" name="Mol. Genet. Genomics">
        <title>Chloroplast genomes of the diatoms Phaeodactylum tricornutum and Thalassiosira pseudonana: comparison with other plastid genomes of the red lineage.</title>
        <authorList>
            <person name="Oudot-Le Secq M.-P."/>
            <person name="Grimwood J."/>
            <person name="Shapiro H."/>
            <person name="Armbrust E.V."/>
            <person name="Bowler C."/>
            <person name="Green B.R."/>
        </authorList>
    </citation>
    <scope>NUCLEOTIDE SEQUENCE [LARGE SCALE GENOMIC DNA]</scope>
    <source>
        <strain>CCMP1335 / NEPCC58 / CCAP 1085/12</strain>
    </source>
</reference>
<accession>A0T101</accession>
<organism>
    <name type="scientific">Thalassiosira pseudonana</name>
    <name type="common">Marine diatom</name>
    <name type="synonym">Cyclotella nana</name>
    <dbReference type="NCBI Taxonomy" id="35128"/>
    <lineage>
        <taxon>Eukaryota</taxon>
        <taxon>Sar</taxon>
        <taxon>Stramenopiles</taxon>
        <taxon>Ochrophyta</taxon>
        <taxon>Bacillariophyta</taxon>
        <taxon>Coscinodiscophyceae</taxon>
        <taxon>Thalassiosirophycidae</taxon>
        <taxon>Thalassiosirales</taxon>
        <taxon>Thalassiosiraceae</taxon>
        <taxon>Thalassiosira</taxon>
    </lineage>
</organism>